<organismHost>
    <name type="scientific">Escherichia coli</name>
    <dbReference type="NCBI Taxonomy" id="562"/>
</organismHost>
<evidence type="ECO:0000250" key="1">
    <source>
        <dbReference type="UniProtKB" id="P03615"/>
    </source>
</evidence>
<evidence type="ECO:0000305" key="2"/>
<proteinExistence type="evidence at protein level"/>
<organism>
    <name type="scientific">Qbeta virus (strain MX1)</name>
    <dbReference type="NCBI Taxonomy" id="2789016"/>
    <lineage>
        <taxon>Viruses</taxon>
        <taxon>Riboviria</taxon>
        <taxon>Orthornavirae</taxon>
        <taxon>Lenarviricota</taxon>
        <taxon>Leviviricetes</taxon>
        <taxon>Norzivirales</taxon>
        <taxon>Fiersviridae</taxon>
        <taxon>Qubevirus</taxon>
        <taxon>Escherichia virus Qbeta</taxon>
    </lineage>
</organism>
<comment type="function">
    <text evidence="1">Capsid protein self-assembles to form an icosahedral capsid with a T=3 symmetry, about 26 nm in diameter, and consisting of 89 capsid proteins dimers (178 capsid proteins). Involved in viral genome encapsidation through the interaction between a capsid protein dimer and the multiple packaging signals present in the RNA genome. Binding of the capsid proteins to the viral RNA induces a conformational change required for efficient T=3 shell formation. The capsid also contains 1 copy of the A2 maturation protein.</text>
</comment>
<comment type="function">
    <text evidence="1">Acts as a translational repressor of viral replicase synthesis late in infection. This latter function is the result of capsid protein interaction with an RNA hairpin which contains the replicase ribosome-binding site.</text>
</comment>
<comment type="subunit">
    <text evidence="1">Homodimer. The capsid protein dimer binds to the viral RNA via an operator hairpin, but also many other RNA sequences in the viral genome.</text>
</comment>
<comment type="subcellular location">
    <subcellularLocation>
        <location evidence="1">Virion</location>
    </subcellularLocation>
    <text evidence="1">The shell is composed of 89 dimers of the capsid protein and 1 copy of the maturation protein.</text>
</comment>
<comment type="similarity">
    <text evidence="2">Belongs to the Leviviricetes capsid protein family.</text>
</comment>
<reference key="1">
    <citation type="journal article" date="1995" name="J. Mol. Biol.">
        <title>Secondary structure model for the last two domains of single-stranded RNA phage Q beta.</title>
        <authorList>
            <person name="Beekwilder M.J."/>
            <person name="Nieuwenhuizen R."/>
            <person name="van Duin J."/>
        </authorList>
    </citation>
    <scope>NUCLEOTIDE SEQUENCE [GENOMIC RNA]</scope>
</reference>
<reference key="2">
    <citation type="journal article" date="1996" name="J. Mol. Biol.">
        <title>Secondary structure model for the first three domains of Q beta RNA. Control of A-protein synthesis.</title>
        <authorList>
            <person name="Beekwilder J."/>
            <person name="Nieuwenhuizen R."/>
            <person name="Poot R."/>
            <person name="van Duin J."/>
        </authorList>
    </citation>
    <scope>NUCLEOTIDE SEQUENCE [GENOMIC RNA]</scope>
</reference>
<reference key="3">
    <citation type="journal article" date="2006" name="Structure">
        <title>Structural basis of RNA binding discrimination between bacteriophages Qbeta and MS2.</title>
        <authorList>
            <person name="Horn W.T."/>
            <person name="Tars K."/>
            <person name="Grahn E."/>
            <person name="Helgstrand C."/>
            <person name="Baron A.J."/>
            <person name="Lago H."/>
            <person name="Adams C.J."/>
            <person name="Peabody D.S."/>
            <person name="Phillips S.E."/>
            <person name="Stonehouse N.J."/>
            <person name="Liljas L."/>
            <person name="Stockley P.G."/>
        </authorList>
    </citation>
    <scope>RNA-BINDING</scope>
</reference>
<name>CAPSD_BPMX1</name>
<sequence length="133" mass="14198">MAKLQAITLSGIGKNGDVTLNLNPRGVNPTNGVAALSEAGAVPALEKRVTISVSQPSRNRKNYKVQVKIQNPTSCTASGTCDPSVTRSAYADVTFSFTQYSTDEERALVRTELKALLADPMLIDAIDNLNPAY</sequence>
<protein>
    <recommendedName>
        <fullName>Capsid protein</fullName>
        <shortName>CP</shortName>
    </recommendedName>
    <alternativeName>
        <fullName>Coat protein</fullName>
    </alternativeName>
</protein>
<keyword id="KW-0167">Capsid protein</keyword>
<keyword id="KW-1185">Reference proteome</keyword>
<keyword id="KW-0694">RNA-binding</keyword>
<keyword id="KW-1142">T=3 icosahedral capsid protein</keyword>
<keyword id="KW-0810">Translation regulation</keyword>
<keyword id="KW-0946">Virion</keyword>
<feature type="initiator methionine" description="Removed; by host" evidence="1">
    <location>
        <position position="1"/>
    </location>
</feature>
<feature type="chain" id="PRO_0000402536" description="Capsid protein">
    <location>
        <begin position="2"/>
        <end position="133"/>
    </location>
</feature>
<feature type="site" description="RNA-binding" evidence="1">
    <location>
        <position position="90"/>
    </location>
</feature>
<accession>Q9T0R9</accession>
<dbReference type="EMBL" id="AF059242">
    <property type="protein sequence ID" value="AAC14699.1"/>
    <property type="molecule type" value="Genomic_RNA"/>
</dbReference>
<dbReference type="RefSeq" id="NP_046751.1">
    <property type="nucleotide sequence ID" value="NC_001890.1"/>
</dbReference>
<dbReference type="SMR" id="Q9T0R9"/>
<dbReference type="GeneID" id="1261502"/>
<dbReference type="KEGG" id="vg:1261502"/>
<dbReference type="Proteomes" id="UP000001832">
    <property type="component" value="Genome"/>
</dbReference>
<dbReference type="GO" id="GO:0039617">
    <property type="term" value="C:T=3 icosahedral viral capsid"/>
    <property type="evidence" value="ECO:0007669"/>
    <property type="project" value="UniProtKB-KW"/>
</dbReference>
<dbReference type="GO" id="GO:0003723">
    <property type="term" value="F:RNA binding"/>
    <property type="evidence" value="ECO:0007669"/>
    <property type="project" value="UniProtKB-KW"/>
</dbReference>
<dbReference type="GO" id="GO:0005198">
    <property type="term" value="F:structural molecule activity"/>
    <property type="evidence" value="ECO:0007669"/>
    <property type="project" value="InterPro"/>
</dbReference>
<dbReference type="GO" id="GO:0006417">
    <property type="term" value="P:regulation of translation"/>
    <property type="evidence" value="ECO:0007669"/>
    <property type="project" value="UniProtKB-KW"/>
</dbReference>
<dbReference type="Gene3D" id="3.30.380.10">
    <property type="entry name" value="MS2 Viral Coat Protein"/>
    <property type="match status" value="1"/>
</dbReference>
<dbReference type="InterPro" id="IPR002703">
    <property type="entry name" value="Levivir_coat"/>
</dbReference>
<dbReference type="InterPro" id="IPR015954">
    <property type="entry name" value="Phage_RNA-type_capsid"/>
</dbReference>
<dbReference type="Pfam" id="PF01819">
    <property type="entry name" value="Levi_coat"/>
    <property type="match status" value="1"/>
</dbReference>
<dbReference type="SUPFAM" id="SSF55405">
    <property type="entry name" value="RNA bacteriophage capsid protein"/>
    <property type="match status" value="1"/>
</dbReference>